<protein>
    <recommendedName>
        <fullName evidence="1">Ribonuclease PH</fullName>
        <shortName evidence="1">RNase PH</shortName>
        <ecNumber evidence="1">2.7.7.56</ecNumber>
    </recommendedName>
    <alternativeName>
        <fullName evidence="1">tRNA nucleotidyltransferase</fullName>
    </alternativeName>
</protein>
<comment type="function">
    <text evidence="1">Phosphorolytic 3'-5' exoribonuclease that plays an important role in tRNA 3'-end maturation. Removes nucleotide residues following the 3'-CCA terminus of tRNAs; can also add nucleotides to the ends of RNA molecules by using nucleoside diphosphates as substrates, but this may not be physiologically important. Probably plays a role in initiation of 16S rRNA degradation (leading to ribosome degradation) during starvation.</text>
</comment>
<comment type="catalytic activity">
    <reaction evidence="1">
        <text>tRNA(n+1) + phosphate = tRNA(n) + a ribonucleoside 5'-diphosphate</text>
        <dbReference type="Rhea" id="RHEA:10628"/>
        <dbReference type="Rhea" id="RHEA-COMP:17343"/>
        <dbReference type="Rhea" id="RHEA-COMP:17344"/>
        <dbReference type="ChEBI" id="CHEBI:43474"/>
        <dbReference type="ChEBI" id="CHEBI:57930"/>
        <dbReference type="ChEBI" id="CHEBI:173114"/>
        <dbReference type="EC" id="2.7.7.56"/>
    </reaction>
</comment>
<comment type="subunit">
    <text evidence="1">Homohexameric ring arranged as a trimer of dimers.</text>
</comment>
<comment type="similarity">
    <text evidence="1">Belongs to the RNase PH family.</text>
</comment>
<name>RNPH_AZOSB</name>
<feature type="chain" id="PRO_1000024774" description="Ribonuclease PH">
    <location>
        <begin position="1"/>
        <end position="239"/>
    </location>
</feature>
<feature type="binding site" evidence="1">
    <location>
        <position position="86"/>
    </location>
    <ligand>
        <name>phosphate</name>
        <dbReference type="ChEBI" id="CHEBI:43474"/>
        <note>substrate</note>
    </ligand>
</feature>
<feature type="binding site" evidence="1">
    <location>
        <begin position="124"/>
        <end position="126"/>
    </location>
    <ligand>
        <name>phosphate</name>
        <dbReference type="ChEBI" id="CHEBI:43474"/>
        <note>substrate</note>
    </ligand>
</feature>
<sequence length="239" mass="25272">MRPSQRQANELRPVRLTRRYTRHAEGSVLVEFGDTRVLCTASVEEAVPPFLKGKGRGWVTAEYGMLPRATHTRSAREAAKGKQTGRTQEIQRLIGRSLRAVVDLAALGERQVVIDCDVLQADGGTRTASITGAYVALHDALEGLVAAGKLAANPMTDFVAAISVGIVDGVPVLDLDYTEDSGCDTDMNVVMTGSGGIIEVQGTAEGTPFSRTELNALIDLAEAGIGRLVELQKAALAGA</sequence>
<evidence type="ECO:0000255" key="1">
    <source>
        <dbReference type="HAMAP-Rule" id="MF_00564"/>
    </source>
</evidence>
<dbReference type="EC" id="2.7.7.56" evidence="1"/>
<dbReference type="EMBL" id="AM406670">
    <property type="protein sequence ID" value="CAL96579.1"/>
    <property type="molecule type" value="Genomic_DNA"/>
</dbReference>
<dbReference type="RefSeq" id="WP_011767685.1">
    <property type="nucleotide sequence ID" value="NC_008702.1"/>
</dbReference>
<dbReference type="SMR" id="A1KCM3"/>
<dbReference type="STRING" id="62928.azo3963"/>
<dbReference type="KEGG" id="azo:azo3963"/>
<dbReference type="eggNOG" id="COG0689">
    <property type="taxonomic scope" value="Bacteria"/>
</dbReference>
<dbReference type="HOGENOM" id="CLU_050858_0_0_4"/>
<dbReference type="Proteomes" id="UP000002588">
    <property type="component" value="Chromosome"/>
</dbReference>
<dbReference type="GO" id="GO:0000175">
    <property type="term" value="F:3'-5'-RNA exonuclease activity"/>
    <property type="evidence" value="ECO:0007669"/>
    <property type="project" value="UniProtKB-UniRule"/>
</dbReference>
<dbReference type="GO" id="GO:0000049">
    <property type="term" value="F:tRNA binding"/>
    <property type="evidence" value="ECO:0007669"/>
    <property type="project" value="UniProtKB-UniRule"/>
</dbReference>
<dbReference type="GO" id="GO:0009022">
    <property type="term" value="F:tRNA nucleotidyltransferase activity"/>
    <property type="evidence" value="ECO:0007669"/>
    <property type="project" value="UniProtKB-UniRule"/>
</dbReference>
<dbReference type="GO" id="GO:0016075">
    <property type="term" value="P:rRNA catabolic process"/>
    <property type="evidence" value="ECO:0007669"/>
    <property type="project" value="UniProtKB-UniRule"/>
</dbReference>
<dbReference type="GO" id="GO:0006364">
    <property type="term" value="P:rRNA processing"/>
    <property type="evidence" value="ECO:0007669"/>
    <property type="project" value="UniProtKB-KW"/>
</dbReference>
<dbReference type="GO" id="GO:0008033">
    <property type="term" value="P:tRNA processing"/>
    <property type="evidence" value="ECO:0007669"/>
    <property type="project" value="UniProtKB-UniRule"/>
</dbReference>
<dbReference type="CDD" id="cd11362">
    <property type="entry name" value="RNase_PH_bact"/>
    <property type="match status" value="1"/>
</dbReference>
<dbReference type="FunFam" id="3.30.230.70:FF:000003">
    <property type="entry name" value="Ribonuclease PH"/>
    <property type="match status" value="1"/>
</dbReference>
<dbReference type="Gene3D" id="3.30.230.70">
    <property type="entry name" value="GHMP Kinase, N-terminal domain"/>
    <property type="match status" value="1"/>
</dbReference>
<dbReference type="HAMAP" id="MF_00564">
    <property type="entry name" value="RNase_PH"/>
    <property type="match status" value="1"/>
</dbReference>
<dbReference type="InterPro" id="IPR001247">
    <property type="entry name" value="ExoRNase_PH_dom1"/>
</dbReference>
<dbReference type="InterPro" id="IPR015847">
    <property type="entry name" value="ExoRNase_PH_dom2"/>
</dbReference>
<dbReference type="InterPro" id="IPR036345">
    <property type="entry name" value="ExoRNase_PH_dom2_sf"/>
</dbReference>
<dbReference type="InterPro" id="IPR027408">
    <property type="entry name" value="PNPase/RNase_PH_dom_sf"/>
</dbReference>
<dbReference type="InterPro" id="IPR020568">
    <property type="entry name" value="Ribosomal_Su5_D2-typ_SF"/>
</dbReference>
<dbReference type="InterPro" id="IPR050080">
    <property type="entry name" value="RNase_PH"/>
</dbReference>
<dbReference type="InterPro" id="IPR002381">
    <property type="entry name" value="RNase_PH_bac-type"/>
</dbReference>
<dbReference type="InterPro" id="IPR018336">
    <property type="entry name" value="RNase_PH_CS"/>
</dbReference>
<dbReference type="NCBIfam" id="TIGR01966">
    <property type="entry name" value="RNasePH"/>
    <property type="match status" value="1"/>
</dbReference>
<dbReference type="PANTHER" id="PTHR11953">
    <property type="entry name" value="EXOSOME COMPLEX COMPONENT"/>
    <property type="match status" value="1"/>
</dbReference>
<dbReference type="PANTHER" id="PTHR11953:SF0">
    <property type="entry name" value="EXOSOME COMPLEX COMPONENT RRP41"/>
    <property type="match status" value="1"/>
</dbReference>
<dbReference type="Pfam" id="PF01138">
    <property type="entry name" value="RNase_PH"/>
    <property type="match status" value="1"/>
</dbReference>
<dbReference type="Pfam" id="PF03725">
    <property type="entry name" value="RNase_PH_C"/>
    <property type="match status" value="1"/>
</dbReference>
<dbReference type="SUPFAM" id="SSF55666">
    <property type="entry name" value="Ribonuclease PH domain 2-like"/>
    <property type="match status" value="1"/>
</dbReference>
<dbReference type="SUPFAM" id="SSF54211">
    <property type="entry name" value="Ribosomal protein S5 domain 2-like"/>
    <property type="match status" value="1"/>
</dbReference>
<dbReference type="PROSITE" id="PS01277">
    <property type="entry name" value="RIBONUCLEASE_PH"/>
    <property type="match status" value="1"/>
</dbReference>
<gene>
    <name evidence="1" type="primary">rph</name>
    <name type="ordered locus">azo3963</name>
</gene>
<proteinExistence type="inferred from homology"/>
<keyword id="KW-0548">Nucleotidyltransferase</keyword>
<keyword id="KW-1185">Reference proteome</keyword>
<keyword id="KW-0694">RNA-binding</keyword>
<keyword id="KW-0698">rRNA processing</keyword>
<keyword id="KW-0808">Transferase</keyword>
<keyword id="KW-0819">tRNA processing</keyword>
<keyword id="KW-0820">tRNA-binding</keyword>
<reference key="1">
    <citation type="journal article" date="2006" name="Nat. Biotechnol.">
        <title>Complete genome of the mutualistic, N2-fixing grass endophyte Azoarcus sp. strain BH72.</title>
        <authorList>
            <person name="Krause A."/>
            <person name="Ramakumar A."/>
            <person name="Bartels D."/>
            <person name="Battistoni F."/>
            <person name="Bekel T."/>
            <person name="Boch J."/>
            <person name="Boehm M."/>
            <person name="Friedrich F."/>
            <person name="Hurek T."/>
            <person name="Krause L."/>
            <person name="Linke B."/>
            <person name="McHardy A.C."/>
            <person name="Sarkar A."/>
            <person name="Schneiker S."/>
            <person name="Syed A.A."/>
            <person name="Thauer R."/>
            <person name="Vorhoelter F.-J."/>
            <person name="Weidner S."/>
            <person name="Puehler A."/>
            <person name="Reinhold-Hurek B."/>
            <person name="Kaiser O."/>
            <person name="Goesmann A."/>
        </authorList>
    </citation>
    <scope>NUCLEOTIDE SEQUENCE [LARGE SCALE GENOMIC DNA]</scope>
    <source>
        <strain>BH72</strain>
    </source>
</reference>
<accession>A1KCM3</accession>
<organism>
    <name type="scientific">Azoarcus sp. (strain BH72)</name>
    <dbReference type="NCBI Taxonomy" id="418699"/>
    <lineage>
        <taxon>Bacteria</taxon>
        <taxon>Pseudomonadati</taxon>
        <taxon>Pseudomonadota</taxon>
        <taxon>Betaproteobacteria</taxon>
        <taxon>Rhodocyclales</taxon>
        <taxon>Zoogloeaceae</taxon>
        <taxon>Azoarcus</taxon>
    </lineage>
</organism>